<reference key="1">
    <citation type="journal article" date="2006" name="BMC Genomics">
        <title>Complete genome sequence of Shigella flexneri 5b and comparison with Shigella flexneri 2a.</title>
        <authorList>
            <person name="Nie H."/>
            <person name="Yang F."/>
            <person name="Zhang X."/>
            <person name="Yang J."/>
            <person name="Chen L."/>
            <person name="Wang J."/>
            <person name="Xiong Z."/>
            <person name="Peng J."/>
            <person name="Sun L."/>
            <person name="Dong J."/>
            <person name="Xue Y."/>
            <person name="Xu X."/>
            <person name="Chen S."/>
            <person name="Yao Z."/>
            <person name="Shen Y."/>
            <person name="Jin Q."/>
        </authorList>
    </citation>
    <scope>NUCLEOTIDE SEQUENCE [LARGE SCALE GENOMIC DNA]</scope>
    <source>
        <strain>8401</strain>
    </source>
</reference>
<organism>
    <name type="scientific">Shigella flexneri serotype 5b (strain 8401)</name>
    <dbReference type="NCBI Taxonomy" id="373384"/>
    <lineage>
        <taxon>Bacteria</taxon>
        <taxon>Pseudomonadati</taxon>
        <taxon>Pseudomonadota</taxon>
        <taxon>Gammaproteobacteria</taxon>
        <taxon>Enterobacterales</taxon>
        <taxon>Enterobacteriaceae</taxon>
        <taxon>Shigella</taxon>
    </lineage>
</organism>
<dbReference type="EC" id="5.1.3.22" evidence="1"/>
<dbReference type="EMBL" id="CP000266">
    <property type="protein sequence ID" value="ABF06327.1"/>
    <property type="molecule type" value="Genomic_DNA"/>
</dbReference>
<dbReference type="RefSeq" id="WP_000949548.1">
    <property type="nucleotide sequence ID" value="NC_008258.1"/>
</dbReference>
<dbReference type="SMR" id="Q0SX88"/>
<dbReference type="KEGG" id="sfv:SFV_4353"/>
<dbReference type="HOGENOM" id="CLU_082738_0_0_6"/>
<dbReference type="UniPathway" id="UPA00263">
    <property type="reaction ID" value="UER00379"/>
</dbReference>
<dbReference type="Proteomes" id="UP000000659">
    <property type="component" value="Chromosome"/>
</dbReference>
<dbReference type="GO" id="GO:0016861">
    <property type="term" value="F:intramolecular oxidoreductase activity, interconverting aldoses and ketoses"/>
    <property type="evidence" value="ECO:0007669"/>
    <property type="project" value="InterPro"/>
</dbReference>
<dbReference type="GO" id="GO:0034015">
    <property type="term" value="F:L-ribulose-5-phosphate 3-epimerase activity"/>
    <property type="evidence" value="ECO:0007669"/>
    <property type="project" value="UniProtKB-UniRule"/>
</dbReference>
<dbReference type="GO" id="GO:0019854">
    <property type="term" value="P:L-ascorbic acid catabolic process"/>
    <property type="evidence" value="ECO:0007669"/>
    <property type="project" value="UniProtKB-UniRule"/>
</dbReference>
<dbReference type="FunFam" id="3.20.20.150:FF:000003">
    <property type="entry name" value="L-ribulose-5-phosphate 3-epimerase UlaE"/>
    <property type="match status" value="1"/>
</dbReference>
<dbReference type="Gene3D" id="3.20.20.150">
    <property type="entry name" value="Divalent-metal-dependent TIM barrel enzymes"/>
    <property type="match status" value="1"/>
</dbReference>
<dbReference type="HAMAP" id="MF_01951">
    <property type="entry name" value="UlaE"/>
    <property type="match status" value="1"/>
</dbReference>
<dbReference type="InterPro" id="IPR004560">
    <property type="entry name" value="L-Ru-5P_3-Epase"/>
</dbReference>
<dbReference type="InterPro" id="IPR023492">
    <property type="entry name" value="L-Ru-5P_3-Epase_Enterobacteria"/>
</dbReference>
<dbReference type="InterPro" id="IPR050417">
    <property type="entry name" value="Sugar_Epim/Isomerase"/>
</dbReference>
<dbReference type="InterPro" id="IPR036237">
    <property type="entry name" value="Xyl_isomerase-like_sf"/>
</dbReference>
<dbReference type="InterPro" id="IPR013022">
    <property type="entry name" value="Xyl_isomerase-like_TIM-brl"/>
</dbReference>
<dbReference type="NCBIfam" id="TIGR00542">
    <property type="entry name" value="hxl6Piso_put"/>
    <property type="match status" value="1"/>
</dbReference>
<dbReference type="NCBIfam" id="NF009688">
    <property type="entry name" value="PRK13209.1"/>
    <property type="match status" value="1"/>
</dbReference>
<dbReference type="NCBIfam" id="NF009689">
    <property type="entry name" value="PRK13210.1"/>
    <property type="match status" value="1"/>
</dbReference>
<dbReference type="PANTHER" id="PTHR43489">
    <property type="entry name" value="ISOMERASE"/>
    <property type="match status" value="1"/>
</dbReference>
<dbReference type="PANTHER" id="PTHR43489:SF8">
    <property type="entry name" value="L-RIBULOSE-5-PHOSPHATE 3-EPIMERASE ULAE"/>
    <property type="match status" value="1"/>
</dbReference>
<dbReference type="Pfam" id="PF01261">
    <property type="entry name" value="AP_endonuc_2"/>
    <property type="match status" value="1"/>
</dbReference>
<dbReference type="SUPFAM" id="SSF51658">
    <property type="entry name" value="Xylose isomerase-like"/>
    <property type="match status" value="1"/>
</dbReference>
<sequence>MLSKQIPLGIYEKALPAGECWLERLRLAKTLGFDFVEMSVDETNERLSRLDWSRVQRLALVNAIVETGVRVPSMCLSAHRRFPLVSEDDAVRAQGLEIMRKAIQFAQDVGIRVIQLSGYDVYYQEANNETRRRFRDGLKESVEMASRAQVTLAMEIMDYPLMNSISKALGYAHYLNNPWFQLYPDIGNLSAWDNDVQMELQAGIGHIVAVHVKDTKPGVFKNVPFGEGVVDFERCFETLKQSGYCGPYLIEMWSETAEDPAAEVVKACDWVKARMAKAGMVEAA</sequence>
<accession>Q0SX88</accession>
<name>ULAE_SHIF8</name>
<evidence type="ECO:0000255" key="1">
    <source>
        <dbReference type="HAMAP-Rule" id="MF_01951"/>
    </source>
</evidence>
<gene>
    <name evidence="1" type="primary">ulaE</name>
    <name type="ordered locus">SFV_4353</name>
</gene>
<keyword id="KW-0413">Isomerase</keyword>
<comment type="function">
    <text evidence="1">Catalyzes the isomerization of L-xylulose-5-phosphate to L-ribulose-5-phosphate. Is involved in the anaerobic L-ascorbate utilization.</text>
</comment>
<comment type="catalytic activity">
    <reaction evidence="1">
        <text>L-ribulose 5-phosphate = L-xylulose 5-phosphate</text>
        <dbReference type="Rhea" id="RHEA:18497"/>
        <dbReference type="ChEBI" id="CHEBI:57829"/>
        <dbReference type="ChEBI" id="CHEBI:58226"/>
        <dbReference type="EC" id="5.1.3.22"/>
    </reaction>
</comment>
<comment type="pathway">
    <text evidence="1">Cofactor degradation; L-ascorbate degradation; D-xylulose 5-phosphate from L-ascorbate: step 3/4.</text>
</comment>
<comment type="induction">
    <text evidence="1">Induced by L-ascorbate. Repressed by UlaR.</text>
</comment>
<comment type="similarity">
    <text evidence="1">Belongs to the L-ribulose-5-phosphate 3-epimerase family.</text>
</comment>
<proteinExistence type="inferred from homology"/>
<protein>
    <recommendedName>
        <fullName evidence="1">L-ribulose-5-phosphate 3-epimerase UlaE</fullName>
        <ecNumber evidence="1">5.1.3.22</ecNumber>
    </recommendedName>
    <alternativeName>
        <fullName evidence="1">L-ascorbate utilization protein E</fullName>
    </alternativeName>
    <alternativeName>
        <fullName evidence="1">L-xylulose-5-phosphate 3-epimerase</fullName>
    </alternativeName>
</protein>
<feature type="chain" id="PRO_1000070635" description="L-ribulose-5-phosphate 3-epimerase UlaE">
    <location>
        <begin position="1"/>
        <end position="284"/>
    </location>
</feature>